<comment type="catalytic activity">
    <reaction evidence="1">
        <text>D-arabinose 5-phosphate + phosphoenolpyruvate + H2O = 3-deoxy-alpha-D-manno-2-octulosonate-8-phosphate + phosphate</text>
        <dbReference type="Rhea" id="RHEA:14053"/>
        <dbReference type="ChEBI" id="CHEBI:15377"/>
        <dbReference type="ChEBI" id="CHEBI:43474"/>
        <dbReference type="ChEBI" id="CHEBI:57693"/>
        <dbReference type="ChEBI" id="CHEBI:58702"/>
        <dbReference type="ChEBI" id="CHEBI:85985"/>
        <dbReference type="EC" id="2.5.1.55"/>
    </reaction>
</comment>
<comment type="pathway">
    <text evidence="1">Carbohydrate biosynthesis; 3-deoxy-D-manno-octulosonate biosynthesis; 3-deoxy-D-manno-octulosonate from D-ribulose 5-phosphate: step 2/3.</text>
</comment>
<comment type="pathway">
    <text evidence="1">Bacterial outer membrane biogenesis; lipopolysaccharide biosynthesis.</text>
</comment>
<comment type="subcellular location">
    <subcellularLocation>
        <location evidence="1">Cytoplasm</location>
    </subcellularLocation>
</comment>
<comment type="similarity">
    <text evidence="1">Belongs to the KdsA family.</text>
</comment>
<name>KDSA_BORPE</name>
<feature type="chain" id="PRO_0000187105" description="2-dehydro-3-deoxyphosphooctonate aldolase">
    <location>
        <begin position="1"/>
        <end position="285"/>
    </location>
</feature>
<dbReference type="EC" id="2.5.1.55" evidence="1"/>
<dbReference type="EMBL" id="BX640418">
    <property type="protein sequence ID" value="CAE42659.1"/>
    <property type="molecule type" value="Genomic_DNA"/>
</dbReference>
<dbReference type="RefSeq" id="NP_881021.1">
    <property type="nucleotide sequence ID" value="NC_002929.2"/>
</dbReference>
<dbReference type="RefSeq" id="WP_003813703.1">
    <property type="nucleotide sequence ID" value="NZ_CP039022.1"/>
</dbReference>
<dbReference type="SMR" id="Q7VW77"/>
<dbReference type="STRING" id="257313.BP2388"/>
<dbReference type="PaxDb" id="257313-BP2388"/>
<dbReference type="GeneID" id="93205036"/>
<dbReference type="KEGG" id="bpe:BP2388"/>
<dbReference type="PATRIC" id="fig|257313.5.peg.2571"/>
<dbReference type="eggNOG" id="COG2877">
    <property type="taxonomic scope" value="Bacteria"/>
</dbReference>
<dbReference type="HOGENOM" id="CLU_036666_0_0_4"/>
<dbReference type="UniPathway" id="UPA00030"/>
<dbReference type="UniPathway" id="UPA00357">
    <property type="reaction ID" value="UER00474"/>
</dbReference>
<dbReference type="Proteomes" id="UP000002676">
    <property type="component" value="Chromosome"/>
</dbReference>
<dbReference type="GO" id="GO:0005737">
    <property type="term" value="C:cytoplasm"/>
    <property type="evidence" value="ECO:0007669"/>
    <property type="project" value="UniProtKB-SubCell"/>
</dbReference>
<dbReference type="GO" id="GO:0008676">
    <property type="term" value="F:3-deoxy-8-phosphooctulonate synthase activity"/>
    <property type="evidence" value="ECO:0007669"/>
    <property type="project" value="UniProtKB-UniRule"/>
</dbReference>
<dbReference type="GO" id="GO:0019294">
    <property type="term" value="P:keto-3-deoxy-D-manno-octulosonic acid biosynthetic process"/>
    <property type="evidence" value="ECO:0007669"/>
    <property type="project" value="UniProtKB-UniRule"/>
</dbReference>
<dbReference type="Gene3D" id="3.20.20.70">
    <property type="entry name" value="Aldolase class I"/>
    <property type="match status" value="1"/>
</dbReference>
<dbReference type="HAMAP" id="MF_00056">
    <property type="entry name" value="KDO8P_synth"/>
    <property type="match status" value="1"/>
</dbReference>
<dbReference type="InterPro" id="IPR013785">
    <property type="entry name" value="Aldolase_TIM"/>
</dbReference>
<dbReference type="InterPro" id="IPR006218">
    <property type="entry name" value="DAHP1/KDSA"/>
</dbReference>
<dbReference type="InterPro" id="IPR006269">
    <property type="entry name" value="KDO8P_synthase"/>
</dbReference>
<dbReference type="NCBIfam" id="TIGR01362">
    <property type="entry name" value="KDO8P_synth"/>
    <property type="match status" value="1"/>
</dbReference>
<dbReference type="NCBIfam" id="NF003543">
    <property type="entry name" value="PRK05198.1"/>
    <property type="match status" value="1"/>
</dbReference>
<dbReference type="PANTHER" id="PTHR21057">
    <property type="entry name" value="PHOSPHO-2-DEHYDRO-3-DEOXYHEPTONATE ALDOLASE"/>
    <property type="match status" value="1"/>
</dbReference>
<dbReference type="Pfam" id="PF00793">
    <property type="entry name" value="DAHP_synth_1"/>
    <property type="match status" value="1"/>
</dbReference>
<dbReference type="SUPFAM" id="SSF51569">
    <property type="entry name" value="Aldolase"/>
    <property type="match status" value="1"/>
</dbReference>
<protein>
    <recommendedName>
        <fullName evidence="1">2-dehydro-3-deoxyphosphooctonate aldolase</fullName>
        <ecNumber evidence="1">2.5.1.55</ecNumber>
    </recommendedName>
    <alternativeName>
        <fullName evidence="1">3-deoxy-D-manno-octulosonic acid 8-phosphate synthase</fullName>
    </alternativeName>
    <alternativeName>
        <fullName evidence="1">KDO-8-phosphate synthase</fullName>
        <shortName evidence="1">KDO 8-P synthase</shortName>
        <shortName evidence="1">KDOPS</shortName>
    </alternativeName>
    <alternativeName>
        <fullName evidence="1">Phospho-2-dehydro-3-deoxyoctonate aldolase</fullName>
    </alternativeName>
</protein>
<reference key="1">
    <citation type="journal article" date="2003" name="Nat. Genet.">
        <title>Comparative analysis of the genome sequences of Bordetella pertussis, Bordetella parapertussis and Bordetella bronchiseptica.</title>
        <authorList>
            <person name="Parkhill J."/>
            <person name="Sebaihia M."/>
            <person name="Preston A."/>
            <person name="Murphy L.D."/>
            <person name="Thomson N.R."/>
            <person name="Harris D.E."/>
            <person name="Holden M.T.G."/>
            <person name="Churcher C.M."/>
            <person name="Bentley S.D."/>
            <person name="Mungall K.L."/>
            <person name="Cerdeno-Tarraga A.-M."/>
            <person name="Temple L."/>
            <person name="James K.D."/>
            <person name="Harris B."/>
            <person name="Quail M.A."/>
            <person name="Achtman M."/>
            <person name="Atkin R."/>
            <person name="Baker S."/>
            <person name="Basham D."/>
            <person name="Bason N."/>
            <person name="Cherevach I."/>
            <person name="Chillingworth T."/>
            <person name="Collins M."/>
            <person name="Cronin A."/>
            <person name="Davis P."/>
            <person name="Doggett J."/>
            <person name="Feltwell T."/>
            <person name="Goble A."/>
            <person name="Hamlin N."/>
            <person name="Hauser H."/>
            <person name="Holroyd S."/>
            <person name="Jagels K."/>
            <person name="Leather S."/>
            <person name="Moule S."/>
            <person name="Norberczak H."/>
            <person name="O'Neil S."/>
            <person name="Ormond D."/>
            <person name="Price C."/>
            <person name="Rabbinowitsch E."/>
            <person name="Rutter S."/>
            <person name="Sanders M."/>
            <person name="Saunders D."/>
            <person name="Seeger K."/>
            <person name="Sharp S."/>
            <person name="Simmonds M."/>
            <person name="Skelton J."/>
            <person name="Squares R."/>
            <person name="Squares S."/>
            <person name="Stevens K."/>
            <person name="Unwin L."/>
            <person name="Whitehead S."/>
            <person name="Barrell B.G."/>
            <person name="Maskell D.J."/>
        </authorList>
    </citation>
    <scope>NUCLEOTIDE SEQUENCE [LARGE SCALE GENOMIC DNA]</scope>
    <source>
        <strain>Tohama I / ATCC BAA-589 / NCTC 13251</strain>
    </source>
</reference>
<proteinExistence type="inferred from homology"/>
<sequence>MMKACGFDIGLDHPFFLIAGPCVIESRELAFETAGRLKEITGKLGVPFIYKSSFDKANRSSGKSFRGPGMDEGLKILADVRAQLDVPVLTDVHDIDQVAPVAAVVDMLQTPAFLCRQTDFIRACAATLKPVNIKKGQFLAPHDMLQVARKARDAALEAGGDGNNILVCERGASFGYNNLVSDMRSLAIMRETDCPVVFDATHSVQLPGGQGASSGGQREFVPVLARAAVAVGVAGLFMETHPNPACAMSDGPNAVPLDRMAELLESLVALDRVTKRSGFLENQFV</sequence>
<accession>Q7VW77</accession>
<evidence type="ECO:0000255" key="1">
    <source>
        <dbReference type="HAMAP-Rule" id="MF_00056"/>
    </source>
</evidence>
<organism>
    <name type="scientific">Bordetella pertussis (strain Tohama I / ATCC BAA-589 / NCTC 13251)</name>
    <dbReference type="NCBI Taxonomy" id="257313"/>
    <lineage>
        <taxon>Bacteria</taxon>
        <taxon>Pseudomonadati</taxon>
        <taxon>Pseudomonadota</taxon>
        <taxon>Betaproteobacteria</taxon>
        <taxon>Burkholderiales</taxon>
        <taxon>Alcaligenaceae</taxon>
        <taxon>Bordetella</taxon>
    </lineage>
</organism>
<keyword id="KW-0963">Cytoplasm</keyword>
<keyword id="KW-0448">Lipopolysaccharide biosynthesis</keyword>
<keyword id="KW-1185">Reference proteome</keyword>
<keyword id="KW-0808">Transferase</keyword>
<gene>
    <name evidence="1" type="primary">kdsA</name>
    <name type="ordered locus">BP2388</name>
</gene>